<dbReference type="EC" id="2.3.1.274" evidence="1"/>
<dbReference type="EMBL" id="FM954972">
    <property type="protein sequence ID" value="CAV18073.1"/>
    <property type="molecule type" value="Genomic_DNA"/>
</dbReference>
<dbReference type="SMR" id="B7VLY0"/>
<dbReference type="STRING" id="575788.VS_1021"/>
<dbReference type="KEGG" id="vsp:VS_1021"/>
<dbReference type="eggNOG" id="COG0416">
    <property type="taxonomic scope" value="Bacteria"/>
</dbReference>
<dbReference type="HOGENOM" id="CLU_039379_1_0_6"/>
<dbReference type="UniPathway" id="UPA00085"/>
<dbReference type="Proteomes" id="UP000009100">
    <property type="component" value="Chromosome 1"/>
</dbReference>
<dbReference type="GO" id="GO:0005737">
    <property type="term" value="C:cytoplasm"/>
    <property type="evidence" value="ECO:0007669"/>
    <property type="project" value="UniProtKB-SubCell"/>
</dbReference>
<dbReference type="GO" id="GO:0043811">
    <property type="term" value="F:phosphate:acyl-[acyl carrier protein] acyltransferase activity"/>
    <property type="evidence" value="ECO:0007669"/>
    <property type="project" value="UniProtKB-UniRule"/>
</dbReference>
<dbReference type="GO" id="GO:0006633">
    <property type="term" value="P:fatty acid biosynthetic process"/>
    <property type="evidence" value="ECO:0007669"/>
    <property type="project" value="UniProtKB-UniRule"/>
</dbReference>
<dbReference type="GO" id="GO:0008654">
    <property type="term" value="P:phospholipid biosynthetic process"/>
    <property type="evidence" value="ECO:0007669"/>
    <property type="project" value="UniProtKB-KW"/>
</dbReference>
<dbReference type="Gene3D" id="3.40.718.10">
    <property type="entry name" value="Isopropylmalate Dehydrogenase"/>
    <property type="match status" value="1"/>
</dbReference>
<dbReference type="HAMAP" id="MF_00019">
    <property type="entry name" value="PlsX"/>
    <property type="match status" value="1"/>
</dbReference>
<dbReference type="InterPro" id="IPR003664">
    <property type="entry name" value="FA_synthesis"/>
</dbReference>
<dbReference type="InterPro" id="IPR012281">
    <property type="entry name" value="Phospholipid_synth_PlsX-like"/>
</dbReference>
<dbReference type="NCBIfam" id="TIGR00182">
    <property type="entry name" value="plsX"/>
    <property type="match status" value="1"/>
</dbReference>
<dbReference type="PANTHER" id="PTHR30100">
    <property type="entry name" value="FATTY ACID/PHOSPHOLIPID SYNTHESIS PROTEIN PLSX"/>
    <property type="match status" value="1"/>
</dbReference>
<dbReference type="PANTHER" id="PTHR30100:SF1">
    <property type="entry name" value="PHOSPHATE ACYLTRANSFERASE"/>
    <property type="match status" value="1"/>
</dbReference>
<dbReference type="Pfam" id="PF02504">
    <property type="entry name" value="FA_synthesis"/>
    <property type="match status" value="1"/>
</dbReference>
<dbReference type="PIRSF" id="PIRSF002465">
    <property type="entry name" value="Phsphlp_syn_PlsX"/>
    <property type="match status" value="1"/>
</dbReference>
<dbReference type="SUPFAM" id="SSF53659">
    <property type="entry name" value="Isocitrate/Isopropylmalate dehydrogenase-like"/>
    <property type="match status" value="1"/>
</dbReference>
<organism>
    <name type="scientific">Vibrio atlanticus (strain LGP32)</name>
    <name type="common">Vibrio splendidus (strain Mel32)</name>
    <dbReference type="NCBI Taxonomy" id="575788"/>
    <lineage>
        <taxon>Bacteria</taxon>
        <taxon>Pseudomonadati</taxon>
        <taxon>Pseudomonadota</taxon>
        <taxon>Gammaproteobacteria</taxon>
        <taxon>Vibrionales</taxon>
        <taxon>Vibrionaceae</taxon>
        <taxon>Vibrio</taxon>
    </lineage>
</organism>
<evidence type="ECO:0000255" key="1">
    <source>
        <dbReference type="HAMAP-Rule" id="MF_00019"/>
    </source>
</evidence>
<feature type="chain" id="PRO_1000193156" description="Phosphate acyltransferase">
    <location>
        <begin position="1"/>
        <end position="341"/>
    </location>
</feature>
<proteinExistence type="inferred from homology"/>
<comment type="function">
    <text evidence="1">Catalyzes the reversible formation of acyl-phosphate (acyl-PO(4)) from acyl-[acyl-carrier-protein] (acyl-ACP). This enzyme utilizes acyl-ACP as fatty acyl donor, but not acyl-CoA.</text>
</comment>
<comment type="catalytic activity">
    <reaction evidence="1">
        <text>a fatty acyl-[ACP] + phosphate = an acyl phosphate + holo-[ACP]</text>
        <dbReference type="Rhea" id="RHEA:42292"/>
        <dbReference type="Rhea" id="RHEA-COMP:9685"/>
        <dbReference type="Rhea" id="RHEA-COMP:14125"/>
        <dbReference type="ChEBI" id="CHEBI:43474"/>
        <dbReference type="ChEBI" id="CHEBI:59918"/>
        <dbReference type="ChEBI" id="CHEBI:64479"/>
        <dbReference type="ChEBI" id="CHEBI:138651"/>
        <dbReference type="EC" id="2.3.1.274"/>
    </reaction>
</comment>
<comment type="pathway">
    <text evidence="1">Lipid metabolism; phospholipid metabolism.</text>
</comment>
<comment type="subunit">
    <text evidence="1">Homodimer. Probably interacts with PlsY.</text>
</comment>
<comment type="subcellular location">
    <subcellularLocation>
        <location evidence="1">Cytoplasm</location>
    </subcellularLocation>
    <text evidence="1">Associated with the membrane possibly through PlsY.</text>
</comment>
<comment type="similarity">
    <text evidence="1">Belongs to the PlsX family.</text>
</comment>
<sequence>MQNLTVALDAMGGDFGPRVTVPAAVQALSYFPELKVILIGDRNAITSQLSSLGRMPDSRLSIQHCDRVISNSEKPSLALRNSQGSSMRAAIDLVAESQADACVSGGNTGALMALSRFRLKLLPGIDRPALVSALPTASGNRTWMLDLGANVSSDADSLFQFAVMGSALAEQHLGRVPRVAILNIGAEEIKGNDLVKRCAEMLSNTQSVNFIGYIEGNQLLQDAADVVVCDGFVGNVCLKTCEGTAQLFIDKLKTRMMASTIKGWIARMLFSELFTELKTLNPDQYNGASLLGLRGIVIKSHGSADVSAVVNAIGEAVHEVKRQVPSRISDRLEAVLLERHY</sequence>
<gene>
    <name evidence="1" type="primary">plsX</name>
    <name type="ordered locus">VS_1021</name>
</gene>
<name>PLSX_VIBA3</name>
<accession>B7VLY0</accession>
<keyword id="KW-0963">Cytoplasm</keyword>
<keyword id="KW-0444">Lipid biosynthesis</keyword>
<keyword id="KW-0443">Lipid metabolism</keyword>
<keyword id="KW-0594">Phospholipid biosynthesis</keyword>
<keyword id="KW-1208">Phospholipid metabolism</keyword>
<keyword id="KW-0808">Transferase</keyword>
<reference key="1">
    <citation type="submission" date="2009-02" db="EMBL/GenBank/DDBJ databases">
        <title>Vibrio splendidus str. LGP32 complete genome.</title>
        <authorList>
            <person name="Mazel D."/>
            <person name="Le Roux F."/>
        </authorList>
    </citation>
    <scope>NUCLEOTIDE SEQUENCE [LARGE SCALE GENOMIC DNA]</scope>
    <source>
        <strain>LGP32</strain>
    </source>
</reference>
<protein>
    <recommendedName>
        <fullName evidence="1">Phosphate acyltransferase</fullName>
        <ecNumber evidence="1">2.3.1.274</ecNumber>
    </recommendedName>
    <alternativeName>
        <fullName evidence="1">Acyl-ACP phosphotransacylase</fullName>
    </alternativeName>
    <alternativeName>
        <fullName evidence="1">Acyl-[acyl-carrier-protein]--phosphate acyltransferase</fullName>
    </alternativeName>
    <alternativeName>
        <fullName evidence="1">Phosphate-acyl-ACP acyltransferase</fullName>
    </alternativeName>
</protein>